<feature type="chain" id="PRO_0000175888" description="Probable transcriptional regulatory protein SO_3401">
    <location>
        <begin position="1"/>
        <end position="240"/>
    </location>
</feature>
<protein>
    <recommendedName>
        <fullName evidence="1">Probable transcriptional regulatory protein SO_3401</fullName>
    </recommendedName>
</protein>
<reference key="1">
    <citation type="journal article" date="2002" name="Nat. Biotechnol.">
        <title>Genome sequence of the dissimilatory metal ion-reducing bacterium Shewanella oneidensis.</title>
        <authorList>
            <person name="Heidelberg J.F."/>
            <person name="Paulsen I.T."/>
            <person name="Nelson K.E."/>
            <person name="Gaidos E.J."/>
            <person name="Nelson W.C."/>
            <person name="Read T.D."/>
            <person name="Eisen J.A."/>
            <person name="Seshadri R."/>
            <person name="Ward N.L."/>
            <person name="Methe B.A."/>
            <person name="Clayton R.A."/>
            <person name="Meyer T."/>
            <person name="Tsapin A."/>
            <person name="Scott J."/>
            <person name="Beanan M.J."/>
            <person name="Brinkac L.M."/>
            <person name="Daugherty S.C."/>
            <person name="DeBoy R.T."/>
            <person name="Dodson R.J."/>
            <person name="Durkin A.S."/>
            <person name="Haft D.H."/>
            <person name="Kolonay J.F."/>
            <person name="Madupu R."/>
            <person name="Peterson J.D."/>
            <person name="Umayam L.A."/>
            <person name="White O."/>
            <person name="Wolf A.M."/>
            <person name="Vamathevan J.J."/>
            <person name="Weidman J.F."/>
            <person name="Impraim M."/>
            <person name="Lee K."/>
            <person name="Berry K.J."/>
            <person name="Lee C."/>
            <person name="Mueller J."/>
            <person name="Khouri H.M."/>
            <person name="Gill J."/>
            <person name="Utterback T.R."/>
            <person name="McDonald L.A."/>
            <person name="Feldblyum T.V."/>
            <person name="Smith H.O."/>
            <person name="Venter J.C."/>
            <person name="Nealson K.H."/>
            <person name="Fraser C.M."/>
        </authorList>
    </citation>
    <scope>NUCLEOTIDE SEQUENCE [LARGE SCALE GENOMIC DNA]</scope>
    <source>
        <strain>ATCC 700550 / JCM 31522 / CIP 106686 / LMG 19005 / NCIMB 14063 / MR-1</strain>
    </source>
</reference>
<proteinExistence type="inferred from homology"/>
<sequence>MGRAYQNRKESMAKTAGQKTRLYSRYGKEIYVVAKQGGVEPDGNLSLRRLIERAKKDQVPAHVIERAIDKAKGGGGEDYDTARYEGFGPGNCMVIVDCLTDNVKRTFTEVRQAFVKNDAKLGTPGTVGHMFDQSAVFVFPGEDEDAILEILMMADVDVNDVEVEDGMISVIAPHTEFFKVKTALTDAMPDINFEVENITFVPQTMTPVSGEDVAVFDKFIAALEDCDDVQNVYHNAEIQD</sequence>
<accession>Q8EBU8</accession>
<dbReference type="EMBL" id="AE014299">
    <property type="protein sequence ID" value="AAN56398.1"/>
    <property type="molecule type" value="Genomic_DNA"/>
</dbReference>
<dbReference type="RefSeq" id="NP_718954.1">
    <property type="nucleotide sequence ID" value="NC_004347.2"/>
</dbReference>
<dbReference type="RefSeq" id="WP_011073261.1">
    <property type="nucleotide sequence ID" value="NC_004347.2"/>
</dbReference>
<dbReference type="SMR" id="Q8EBU8"/>
<dbReference type="STRING" id="211586.SO_3401"/>
<dbReference type="PaxDb" id="211586-SO_3401"/>
<dbReference type="KEGG" id="son:SO_3401"/>
<dbReference type="PATRIC" id="fig|211586.12.peg.3297"/>
<dbReference type="eggNOG" id="COG0217">
    <property type="taxonomic scope" value="Bacteria"/>
</dbReference>
<dbReference type="HOGENOM" id="CLU_062974_2_0_6"/>
<dbReference type="OrthoDB" id="9781053at2"/>
<dbReference type="PhylomeDB" id="Q8EBU8"/>
<dbReference type="BioCyc" id="SONE211586:G1GMP-3166-MONOMER"/>
<dbReference type="Proteomes" id="UP000008186">
    <property type="component" value="Chromosome"/>
</dbReference>
<dbReference type="GO" id="GO:0005829">
    <property type="term" value="C:cytosol"/>
    <property type="evidence" value="ECO:0000318"/>
    <property type="project" value="GO_Central"/>
</dbReference>
<dbReference type="GO" id="GO:0003677">
    <property type="term" value="F:DNA binding"/>
    <property type="evidence" value="ECO:0007669"/>
    <property type="project" value="UniProtKB-UniRule"/>
</dbReference>
<dbReference type="GO" id="GO:0006355">
    <property type="term" value="P:regulation of DNA-templated transcription"/>
    <property type="evidence" value="ECO:0007669"/>
    <property type="project" value="UniProtKB-UniRule"/>
</dbReference>
<dbReference type="FunFam" id="1.10.10.200:FF:000003">
    <property type="entry name" value="Probable transcriptional regulatory protein YeeN"/>
    <property type="match status" value="1"/>
</dbReference>
<dbReference type="Gene3D" id="1.10.10.200">
    <property type="match status" value="1"/>
</dbReference>
<dbReference type="Gene3D" id="3.30.70.980">
    <property type="match status" value="2"/>
</dbReference>
<dbReference type="HAMAP" id="MF_00693">
    <property type="entry name" value="Transcrip_reg_TACO1"/>
    <property type="match status" value="1"/>
</dbReference>
<dbReference type="InterPro" id="IPR017856">
    <property type="entry name" value="Integrase-like_N"/>
</dbReference>
<dbReference type="InterPro" id="IPR048300">
    <property type="entry name" value="TACO1_YebC-like_2nd/3rd_dom"/>
</dbReference>
<dbReference type="InterPro" id="IPR049083">
    <property type="entry name" value="TACO1_YebC_N"/>
</dbReference>
<dbReference type="InterPro" id="IPR002876">
    <property type="entry name" value="Transcrip_reg_TACO1-like"/>
</dbReference>
<dbReference type="InterPro" id="IPR026564">
    <property type="entry name" value="Transcrip_reg_TACO1-like_dom3"/>
</dbReference>
<dbReference type="InterPro" id="IPR029072">
    <property type="entry name" value="YebC-like"/>
</dbReference>
<dbReference type="NCBIfam" id="NF009044">
    <property type="entry name" value="PRK12378.1"/>
    <property type="match status" value="1"/>
</dbReference>
<dbReference type="PANTHER" id="PTHR12532">
    <property type="entry name" value="TRANSLATIONAL ACTIVATOR OF CYTOCHROME C OXIDASE 1"/>
    <property type="match status" value="1"/>
</dbReference>
<dbReference type="PANTHER" id="PTHR12532:SF0">
    <property type="entry name" value="TRANSLATIONAL ACTIVATOR OF CYTOCHROME C OXIDASE 1"/>
    <property type="match status" value="1"/>
</dbReference>
<dbReference type="Pfam" id="PF20772">
    <property type="entry name" value="TACO1_YebC_N"/>
    <property type="match status" value="1"/>
</dbReference>
<dbReference type="Pfam" id="PF01709">
    <property type="entry name" value="Transcrip_reg"/>
    <property type="match status" value="1"/>
</dbReference>
<dbReference type="SUPFAM" id="SSF75625">
    <property type="entry name" value="YebC-like"/>
    <property type="match status" value="1"/>
</dbReference>
<name>Y3401_SHEON</name>
<gene>
    <name type="ordered locus">SO_3401</name>
</gene>
<evidence type="ECO:0000255" key="1">
    <source>
        <dbReference type="HAMAP-Rule" id="MF_00693"/>
    </source>
</evidence>
<organism>
    <name type="scientific">Shewanella oneidensis (strain ATCC 700550 / JCM 31522 / CIP 106686 / LMG 19005 / NCIMB 14063 / MR-1)</name>
    <dbReference type="NCBI Taxonomy" id="211586"/>
    <lineage>
        <taxon>Bacteria</taxon>
        <taxon>Pseudomonadati</taxon>
        <taxon>Pseudomonadota</taxon>
        <taxon>Gammaproteobacteria</taxon>
        <taxon>Alteromonadales</taxon>
        <taxon>Shewanellaceae</taxon>
        <taxon>Shewanella</taxon>
    </lineage>
</organism>
<comment type="subcellular location">
    <subcellularLocation>
        <location evidence="1">Cytoplasm</location>
    </subcellularLocation>
</comment>
<comment type="similarity">
    <text evidence="1">Belongs to the TACO1 family.</text>
</comment>
<keyword id="KW-0963">Cytoplasm</keyword>
<keyword id="KW-0238">DNA-binding</keyword>
<keyword id="KW-1185">Reference proteome</keyword>
<keyword id="KW-0804">Transcription</keyword>
<keyword id="KW-0805">Transcription regulation</keyword>